<evidence type="ECO:0000255" key="1">
    <source>
        <dbReference type="HAMAP-Rule" id="MF_00052"/>
    </source>
</evidence>
<evidence type="ECO:0000255" key="2">
    <source>
        <dbReference type="PROSITE-ProRule" id="PRU01319"/>
    </source>
</evidence>
<reference key="1">
    <citation type="journal article" date="2004" name="Proc. Natl. Acad. Sci. U.S.A.">
        <title>The genome sequence of the probiotic intestinal bacterium Lactobacillus johnsonii NCC 533.</title>
        <authorList>
            <person name="Pridmore R.D."/>
            <person name="Berger B."/>
            <person name="Desiere F."/>
            <person name="Vilanova D."/>
            <person name="Barretto C."/>
            <person name="Pittet A.-C."/>
            <person name="Zwahlen M.-C."/>
            <person name="Rouvet M."/>
            <person name="Altermann E."/>
            <person name="Barrangou R."/>
            <person name="Mollet B."/>
            <person name="Mercenier A."/>
            <person name="Klaenhammer T."/>
            <person name="Arigoni F."/>
            <person name="Schell M.A."/>
        </authorList>
    </citation>
    <scope>NUCLEOTIDE SEQUENCE [LARGE SCALE GENOMIC DNA]</scope>
    <source>
        <strain>CNCM I-1225 / La1 / NCC 533</strain>
    </source>
</reference>
<organism>
    <name type="scientific">Lactobacillus johnsonii (strain CNCM I-12250 / La1 / NCC 533)</name>
    <dbReference type="NCBI Taxonomy" id="257314"/>
    <lineage>
        <taxon>Bacteria</taxon>
        <taxon>Bacillati</taxon>
        <taxon>Bacillota</taxon>
        <taxon>Bacilli</taxon>
        <taxon>Lactobacillales</taxon>
        <taxon>Lactobacillaceae</taxon>
        <taxon>Lactobacillus</taxon>
    </lineage>
</organism>
<name>RNH2_LACJO</name>
<accession>Q74JK1</accession>
<protein>
    <recommendedName>
        <fullName evidence="1">Ribonuclease HII</fullName>
        <shortName evidence="1">RNase HII</shortName>
        <ecNumber evidence="1">3.1.26.4</ecNumber>
    </recommendedName>
</protein>
<proteinExistence type="inferred from homology"/>
<feature type="chain" id="PRO_0000111582" description="Ribonuclease HII">
    <location>
        <begin position="1"/>
        <end position="250"/>
    </location>
</feature>
<feature type="domain" description="RNase H type-2" evidence="2">
    <location>
        <begin position="66"/>
        <end position="250"/>
    </location>
</feature>
<feature type="binding site" evidence="1">
    <location>
        <position position="72"/>
    </location>
    <ligand>
        <name>a divalent metal cation</name>
        <dbReference type="ChEBI" id="CHEBI:60240"/>
    </ligand>
</feature>
<feature type="binding site" evidence="1">
    <location>
        <position position="73"/>
    </location>
    <ligand>
        <name>a divalent metal cation</name>
        <dbReference type="ChEBI" id="CHEBI:60240"/>
    </ligand>
</feature>
<feature type="binding site" evidence="1">
    <location>
        <position position="164"/>
    </location>
    <ligand>
        <name>a divalent metal cation</name>
        <dbReference type="ChEBI" id="CHEBI:60240"/>
    </ligand>
</feature>
<gene>
    <name evidence="1" type="primary">rnhB</name>
    <name type="ordered locus">LJ_1106</name>
</gene>
<comment type="function">
    <text evidence="1">Endonuclease that specifically degrades the RNA of RNA-DNA hybrids.</text>
</comment>
<comment type="catalytic activity">
    <reaction evidence="1">
        <text>Endonucleolytic cleavage to 5'-phosphomonoester.</text>
        <dbReference type="EC" id="3.1.26.4"/>
    </reaction>
</comment>
<comment type="cofactor">
    <cofactor evidence="1">
        <name>Mn(2+)</name>
        <dbReference type="ChEBI" id="CHEBI:29035"/>
    </cofactor>
    <cofactor evidence="1">
        <name>Mg(2+)</name>
        <dbReference type="ChEBI" id="CHEBI:18420"/>
    </cofactor>
    <text evidence="1">Manganese or magnesium. Binds 1 divalent metal ion per monomer in the absence of substrate. May bind a second metal ion after substrate binding.</text>
</comment>
<comment type="subcellular location">
    <subcellularLocation>
        <location evidence="1">Cytoplasm</location>
    </subcellularLocation>
</comment>
<comment type="similarity">
    <text evidence="1">Belongs to the RNase HII family.</text>
</comment>
<sequence>MTITEIKNLLQGEVSKEQLEELKADERKGVQKLLISYEKRQAKYAKALAQFQSRFSYEKEFWQKDQLVAGVDEVGRGPLAGPVVTAAVILPHDFDLIDVNDSKKLSPKKRQALFPKILEKAVSVSVGLANNDVIDQINIYEADRLAMAHAVQGLKVKPDALLVDAMNVPLNIPQVKLIHGDAKSNSIAAASIVAKVFRDNLMDAYGELYPEYDFKHNAGYGTREHMEALEKYGPTPIHRRSFAPVSEYEK</sequence>
<dbReference type="EC" id="3.1.26.4" evidence="1"/>
<dbReference type="EMBL" id="AE017198">
    <property type="protein sequence ID" value="AAS08928.1"/>
    <property type="molecule type" value="Genomic_DNA"/>
</dbReference>
<dbReference type="RefSeq" id="WP_011161946.1">
    <property type="nucleotide sequence ID" value="NC_005362.1"/>
</dbReference>
<dbReference type="SMR" id="Q74JK1"/>
<dbReference type="KEGG" id="ljo:LJ_1106"/>
<dbReference type="PATRIC" id="fig|257314.6.peg.967"/>
<dbReference type="eggNOG" id="COG0164">
    <property type="taxonomic scope" value="Bacteria"/>
</dbReference>
<dbReference type="HOGENOM" id="CLU_036532_2_1_9"/>
<dbReference type="Proteomes" id="UP000000581">
    <property type="component" value="Chromosome"/>
</dbReference>
<dbReference type="GO" id="GO:0005737">
    <property type="term" value="C:cytoplasm"/>
    <property type="evidence" value="ECO:0007669"/>
    <property type="project" value="UniProtKB-SubCell"/>
</dbReference>
<dbReference type="GO" id="GO:0032299">
    <property type="term" value="C:ribonuclease H2 complex"/>
    <property type="evidence" value="ECO:0007669"/>
    <property type="project" value="TreeGrafter"/>
</dbReference>
<dbReference type="GO" id="GO:0030145">
    <property type="term" value="F:manganese ion binding"/>
    <property type="evidence" value="ECO:0007669"/>
    <property type="project" value="UniProtKB-UniRule"/>
</dbReference>
<dbReference type="GO" id="GO:0003723">
    <property type="term" value="F:RNA binding"/>
    <property type="evidence" value="ECO:0007669"/>
    <property type="project" value="InterPro"/>
</dbReference>
<dbReference type="GO" id="GO:0004523">
    <property type="term" value="F:RNA-DNA hybrid ribonuclease activity"/>
    <property type="evidence" value="ECO:0007669"/>
    <property type="project" value="UniProtKB-UniRule"/>
</dbReference>
<dbReference type="GO" id="GO:0043137">
    <property type="term" value="P:DNA replication, removal of RNA primer"/>
    <property type="evidence" value="ECO:0007669"/>
    <property type="project" value="TreeGrafter"/>
</dbReference>
<dbReference type="GO" id="GO:0006298">
    <property type="term" value="P:mismatch repair"/>
    <property type="evidence" value="ECO:0007669"/>
    <property type="project" value="TreeGrafter"/>
</dbReference>
<dbReference type="CDD" id="cd07182">
    <property type="entry name" value="RNase_HII_bacteria_HII_like"/>
    <property type="match status" value="1"/>
</dbReference>
<dbReference type="FunFam" id="3.30.420.10:FF:000006">
    <property type="entry name" value="Ribonuclease HII"/>
    <property type="match status" value="1"/>
</dbReference>
<dbReference type="Gene3D" id="3.30.420.10">
    <property type="entry name" value="Ribonuclease H-like superfamily/Ribonuclease H"/>
    <property type="match status" value="1"/>
</dbReference>
<dbReference type="HAMAP" id="MF_00052_B">
    <property type="entry name" value="RNase_HII_B"/>
    <property type="match status" value="1"/>
</dbReference>
<dbReference type="InterPro" id="IPR022898">
    <property type="entry name" value="RNase_HII"/>
</dbReference>
<dbReference type="InterPro" id="IPR001352">
    <property type="entry name" value="RNase_HII/HIII"/>
</dbReference>
<dbReference type="InterPro" id="IPR024567">
    <property type="entry name" value="RNase_HII/HIII_dom"/>
</dbReference>
<dbReference type="InterPro" id="IPR012337">
    <property type="entry name" value="RNaseH-like_sf"/>
</dbReference>
<dbReference type="InterPro" id="IPR036397">
    <property type="entry name" value="RNaseH_sf"/>
</dbReference>
<dbReference type="NCBIfam" id="NF000594">
    <property type="entry name" value="PRK00015.1-1"/>
    <property type="match status" value="1"/>
</dbReference>
<dbReference type="NCBIfam" id="NF000595">
    <property type="entry name" value="PRK00015.1-3"/>
    <property type="match status" value="1"/>
</dbReference>
<dbReference type="PANTHER" id="PTHR10954">
    <property type="entry name" value="RIBONUCLEASE H2 SUBUNIT A"/>
    <property type="match status" value="1"/>
</dbReference>
<dbReference type="PANTHER" id="PTHR10954:SF18">
    <property type="entry name" value="RIBONUCLEASE HII"/>
    <property type="match status" value="1"/>
</dbReference>
<dbReference type="Pfam" id="PF01351">
    <property type="entry name" value="RNase_HII"/>
    <property type="match status" value="1"/>
</dbReference>
<dbReference type="SUPFAM" id="SSF53098">
    <property type="entry name" value="Ribonuclease H-like"/>
    <property type="match status" value="1"/>
</dbReference>
<dbReference type="PROSITE" id="PS51975">
    <property type="entry name" value="RNASE_H_2"/>
    <property type="match status" value="1"/>
</dbReference>
<keyword id="KW-0963">Cytoplasm</keyword>
<keyword id="KW-0255">Endonuclease</keyword>
<keyword id="KW-0378">Hydrolase</keyword>
<keyword id="KW-0464">Manganese</keyword>
<keyword id="KW-0479">Metal-binding</keyword>
<keyword id="KW-0540">Nuclease</keyword>